<comment type="function">
    <text evidence="1">Catalyzes the specific phosphorylation of the 3-hydroxyl group of shikimic acid using ATP as a cosubstrate.</text>
</comment>
<comment type="catalytic activity">
    <reaction evidence="1">
        <text>shikimate + ATP = 3-phosphoshikimate + ADP + H(+)</text>
        <dbReference type="Rhea" id="RHEA:13121"/>
        <dbReference type="ChEBI" id="CHEBI:15378"/>
        <dbReference type="ChEBI" id="CHEBI:30616"/>
        <dbReference type="ChEBI" id="CHEBI:36208"/>
        <dbReference type="ChEBI" id="CHEBI:145989"/>
        <dbReference type="ChEBI" id="CHEBI:456216"/>
        <dbReference type="EC" id="2.7.1.71"/>
    </reaction>
</comment>
<comment type="cofactor">
    <cofactor evidence="1">
        <name>Mg(2+)</name>
        <dbReference type="ChEBI" id="CHEBI:18420"/>
    </cofactor>
    <text evidence="1">Binds 1 Mg(2+) ion per subunit.</text>
</comment>
<comment type="pathway">
    <text evidence="1">Metabolic intermediate biosynthesis; chorismate biosynthesis; chorismate from D-erythrose 4-phosphate and phosphoenolpyruvate: step 5/7.</text>
</comment>
<comment type="subunit">
    <text evidence="1">Monomer.</text>
</comment>
<comment type="subcellular location">
    <subcellularLocation>
        <location evidence="1">Cytoplasm</location>
    </subcellularLocation>
</comment>
<comment type="similarity">
    <text evidence="1">Belongs to the shikimate kinase family.</text>
</comment>
<organism>
    <name type="scientific">Cupriavidus pinatubonensis (strain JMP 134 / LMG 1197)</name>
    <name type="common">Cupriavidus necator (strain JMP 134)</name>
    <dbReference type="NCBI Taxonomy" id="264198"/>
    <lineage>
        <taxon>Bacteria</taxon>
        <taxon>Pseudomonadati</taxon>
        <taxon>Pseudomonadota</taxon>
        <taxon>Betaproteobacteria</taxon>
        <taxon>Burkholderiales</taxon>
        <taxon>Burkholderiaceae</taxon>
        <taxon>Cupriavidus</taxon>
    </lineage>
</organism>
<proteinExistence type="inferred from homology"/>
<gene>
    <name evidence="1" type="primary">aroK</name>
    <name type="ordered locus">Reut_A3130</name>
</gene>
<keyword id="KW-0028">Amino-acid biosynthesis</keyword>
<keyword id="KW-0057">Aromatic amino acid biosynthesis</keyword>
<keyword id="KW-0067">ATP-binding</keyword>
<keyword id="KW-0963">Cytoplasm</keyword>
<keyword id="KW-0418">Kinase</keyword>
<keyword id="KW-0460">Magnesium</keyword>
<keyword id="KW-0479">Metal-binding</keyword>
<keyword id="KW-0547">Nucleotide-binding</keyword>
<keyword id="KW-0808">Transferase</keyword>
<sequence>METGRPNLFFVGLMGAGKTTVGRTVARRLHYPFFDSDHELEAHCGVRIPVIFEHEGEEGFRDREAAMIRELTGRSGIVLATGGGAVLRPENRELLKSRGTVVYLRASPHDLWLRTRHDRNRPLLQTEDPKGKLEALYGARDPLYREVADFIIETGKPSVAQLANMVLMQLEMAGFRIDTAAASDQPANDTHS</sequence>
<feature type="chain" id="PRO_0000237917" description="Shikimate kinase">
    <location>
        <begin position="1"/>
        <end position="192"/>
    </location>
</feature>
<feature type="binding site" evidence="1">
    <location>
        <begin position="15"/>
        <end position="20"/>
    </location>
    <ligand>
        <name>ATP</name>
        <dbReference type="ChEBI" id="CHEBI:30616"/>
    </ligand>
</feature>
<feature type="binding site" evidence="1">
    <location>
        <position position="19"/>
    </location>
    <ligand>
        <name>Mg(2+)</name>
        <dbReference type="ChEBI" id="CHEBI:18420"/>
    </ligand>
</feature>
<feature type="binding site" evidence="1">
    <location>
        <position position="37"/>
    </location>
    <ligand>
        <name>substrate</name>
    </ligand>
</feature>
<feature type="binding site" evidence="1">
    <location>
        <position position="61"/>
    </location>
    <ligand>
        <name>substrate</name>
    </ligand>
</feature>
<feature type="binding site" evidence="1">
    <location>
        <position position="83"/>
    </location>
    <ligand>
        <name>substrate</name>
    </ligand>
</feature>
<feature type="binding site" evidence="1">
    <location>
        <position position="121"/>
    </location>
    <ligand>
        <name>ATP</name>
        <dbReference type="ChEBI" id="CHEBI:30616"/>
    </ligand>
</feature>
<feature type="binding site" evidence="1">
    <location>
        <position position="140"/>
    </location>
    <ligand>
        <name>substrate</name>
    </ligand>
</feature>
<name>AROK_CUPPJ</name>
<accession>Q46WJ3</accession>
<evidence type="ECO:0000255" key="1">
    <source>
        <dbReference type="HAMAP-Rule" id="MF_00109"/>
    </source>
</evidence>
<reference key="1">
    <citation type="journal article" date="2010" name="PLoS ONE">
        <title>The complete multipartite genome sequence of Cupriavidus necator JMP134, a versatile pollutant degrader.</title>
        <authorList>
            <person name="Lykidis A."/>
            <person name="Perez-Pantoja D."/>
            <person name="Ledger T."/>
            <person name="Mavromatis K."/>
            <person name="Anderson I.J."/>
            <person name="Ivanova N.N."/>
            <person name="Hooper S.D."/>
            <person name="Lapidus A."/>
            <person name="Lucas S."/>
            <person name="Gonzalez B."/>
            <person name="Kyrpides N.C."/>
        </authorList>
    </citation>
    <scope>NUCLEOTIDE SEQUENCE [LARGE SCALE GENOMIC DNA]</scope>
    <source>
        <strain>JMP134 / LMG 1197</strain>
    </source>
</reference>
<protein>
    <recommendedName>
        <fullName evidence="1">Shikimate kinase</fullName>
        <shortName evidence="1">SK</shortName>
        <ecNumber evidence="1">2.7.1.71</ecNumber>
    </recommendedName>
</protein>
<dbReference type="EC" id="2.7.1.71" evidence="1"/>
<dbReference type="EMBL" id="CP000090">
    <property type="protein sequence ID" value="AAZ62490.1"/>
    <property type="molecule type" value="Genomic_DNA"/>
</dbReference>
<dbReference type="SMR" id="Q46WJ3"/>
<dbReference type="STRING" id="264198.Reut_A3130"/>
<dbReference type="KEGG" id="reu:Reut_A3130"/>
<dbReference type="eggNOG" id="COG0703">
    <property type="taxonomic scope" value="Bacteria"/>
</dbReference>
<dbReference type="HOGENOM" id="CLU_057607_2_2_4"/>
<dbReference type="OrthoDB" id="9800332at2"/>
<dbReference type="UniPathway" id="UPA00053">
    <property type="reaction ID" value="UER00088"/>
</dbReference>
<dbReference type="GO" id="GO:0005829">
    <property type="term" value="C:cytosol"/>
    <property type="evidence" value="ECO:0007669"/>
    <property type="project" value="TreeGrafter"/>
</dbReference>
<dbReference type="GO" id="GO:0005524">
    <property type="term" value="F:ATP binding"/>
    <property type="evidence" value="ECO:0007669"/>
    <property type="project" value="UniProtKB-UniRule"/>
</dbReference>
<dbReference type="GO" id="GO:0000287">
    <property type="term" value="F:magnesium ion binding"/>
    <property type="evidence" value="ECO:0007669"/>
    <property type="project" value="UniProtKB-UniRule"/>
</dbReference>
<dbReference type="GO" id="GO:0004765">
    <property type="term" value="F:shikimate kinase activity"/>
    <property type="evidence" value="ECO:0007669"/>
    <property type="project" value="UniProtKB-UniRule"/>
</dbReference>
<dbReference type="GO" id="GO:0008652">
    <property type="term" value="P:amino acid biosynthetic process"/>
    <property type="evidence" value="ECO:0007669"/>
    <property type="project" value="UniProtKB-KW"/>
</dbReference>
<dbReference type="GO" id="GO:0009073">
    <property type="term" value="P:aromatic amino acid family biosynthetic process"/>
    <property type="evidence" value="ECO:0007669"/>
    <property type="project" value="UniProtKB-KW"/>
</dbReference>
<dbReference type="GO" id="GO:0009423">
    <property type="term" value="P:chorismate biosynthetic process"/>
    <property type="evidence" value="ECO:0007669"/>
    <property type="project" value="UniProtKB-UniRule"/>
</dbReference>
<dbReference type="CDD" id="cd00464">
    <property type="entry name" value="SK"/>
    <property type="match status" value="1"/>
</dbReference>
<dbReference type="Gene3D" id="3.40.50.300">
    <property type="entry name" value="P-loop containing nucleotide triphosphate hydrolases"/>
    <property type="match status" value="1"/>
</dbReference>
<dbReference type="HAMAP" id="MF_00109">
    <property type="entry name" value="Shikimate_kinase"/>
    <property type="match status" value="1"/>
</dbReference>
<dbReference type="InterPro" id="IPR027417">
    <property type="entry name" value="P-loop_NTPase"/>
</dbReference>
<dbReference type="InterPro" id="IPR031322">
    <property type="entry name" value="Shikimate/glucono_kinase"/>
</dbReference>
<dbReference type="InterPro" id="IPR000623">
    <property type="entry name" value="Shikimate_kinase/TSH1"/>
</dbReference>
<dbReference type="InterPro" id="IPR023000">
    <property type="entry name" value="Shikimate_kinase_CS"/>
</dbReference>
<dbReference type="PANTHER" id="PTHR21087">
    <property type="entry name" value="SHIKIMATE KINASE"/>
    <property type="match status" value="1"/>
</dbReference>
<dbReference type="PANTHER" id="PTHR21087:SF16">
    <property type="entry name" value="SHIKIMATE KINASE 1, CHLOROPLASTIC"/>
    <property type="match status" value="1"/>
</dbReference>
<dbReference type="Pfam" id="PF01202">
    <property type="entry name" value="SKI"/>
    <property type="match status" value="1"/>
</dbReference>
<dbReference type="PRINTS" id="PR01100">
    <property type="entry name" value="SHIKIMTKNASE"/>
</dbReference>
<dbReference type="SUPFAM" id="SSF52540">
    <property type="entry name" value="P-loop containing nucleoside triphosphate hydrolases"/>
    <property type="match status" value="1"/>
</dbReference>
<dbReference type="PROSITE" id="PS01128">
    <property type="entry name" value="SHIKIMATE_KINASE"/>
    <property type="match status" value="1"/>
</dbReference>